<feature type="chain" id="PRO_0000205429" description="Mitochondrial ribosome-associated GTPase 2">
    <location>
        <begin position="1"/>
        <end position="406"/>
    </location>
</feature>
<feature type="domain" description="Obg" evidence="2">
    <location>
        <begin position="70"/>
        <end position="224"/>
    </location>
</feature>
<feature type="domain" description="OBG-type G">
    <location>
        <begin position="225"/>
        <end position="390"/>
    </location>
</feature>
<feature type="region of interest" description="Localized in the mitochondria">
    <location>
        <begin position="15"/>
        <end position="406"/>
    </location>
</feature>
<feature type="region of interest" description="Not localized in the mitochondria">
    <location>
        <begin position="30"/>
        <end position="406"/>
    </location>
</feature>
<feature type="binding site" evidence="1">
    <location>
        <begin position="231"/>
        <end position="238"/>
    </location>
    <ligand>
        <name>GTP</name>
        <dbReference type="ChEBI" id="CHEBI:37565"/>
    </ligand>
</feature>
<feature type="binding site" evidence="1">
    <location>
        <position position="238"/>
    </location>
    <ligand>
        <name>Mg(2+)</name>
        <dbReference type="ChEBI" id="CHEBI:18420"/>
    </ligand>
</feature>
<feature type="binding site" evidence="1">
    <location>
        <begin position="256"/>
        <end position="260"/>
    </location>
    <ligand>
        <name>GTP</name>
        <dbReference type="ChEBI" id="CHEBI:37565"/>
    </ligand>
</feature>
<feature type="binding site" evidence="1">
    <location>
        <position position="258"/>
    </location>
    <ligand>
        <name>Mg(2+)</name>
        <dbReference type="ChEBI" id="CHEBI:18420"/>
    </ligand>
</feature>
<feature type="binding site" evidence="1">
    <location>
        <begin position="278"/>
        <end position="281"/>
    </location>
    <ligand>
        <name>GTP</name>
        <dbReference type="ChEBI" id="CHEBI:37565"/>
    </ligand>
</feature>
<feature type="binding site" evidence="1">
    <location>
        <begin position="345"/>
        <end position="348"/>
    </location>
    <ligand>
        <name>GTP</name>
        <dbReference type="ChEBI" id="CHEBI:37565"/>
    </ligand>
</feature>
<feature type="binding site" evidence="1">
    <location>
        <begin position="371"/>
        <end position="373"/>
    </location>
    <ligand>
        <name>GTP</name>
        <dbReference type="ChEBI" id="CHEBI:37565"/>
    </ligand>
</feature>
<feature type="splice variant" id="VSP_056672" description="In isoform 2." evidence="5">
    <location>
        <begin position="1"/>
        <end position="228"/>
    </location>
</feature>
<feature type="sequence variant" id="VAR_033983" description="In dbSNP:rs6062133.">
    <original>G</original>
    <variation>S</variation>
    <location>
        <position position="47"/>
    </location>
</feature>
<feature type="sequence variant" id="VAR_049299" description="In dbSNP:rs11700220.">
    <original>H</original>
    <variation>R</variation>
    <location>
        <position position="93"/>
    </location>
</feature>
<feature type="sequence variant" id="VAR_049300" description="In dbSNP:rs35693261.">
    <original>A</original>
    <variation>V</variation>
    <location>
        <position position="337"/>
    </location>
</feature>
<evidence type="ECO:0000250" key="1"/>
<evidence type="ECO:0000255" key="2">
    <source>
        <dbReference type="PROSITE-ProRule" id="PRU01231"/>
    </source>
</evidence>
<evidence type="ECO:0000269" key="3">
    <source>
    </source>
</evidence>
<evidence type="ECO:0000269" key="4">
    <source>
    </source>
</evidence>
<evidence type="ECO:0000303" key="5">
    <source>
    </source>
</evidence>
<evidence type="ECO:0000305" key="6"/>
<sequence length="406" mass="43955">MAPARCFSARLRTVFQGVGHWALSTWAGLKPSRLLPQRASPRLLSVGRADLAKHQELPGKKLLSEKKLKRYFVDYRRVLVCGGNGGAGASCFHSEPRKEFGGPDGGDGGNGGHVILRVDQQVKSLSSVLSRYQGFSGEDGGSKNCFGRSGAVLYIRVPVGTLVKEGGRVVADLSCVGDEYIAALGGAGGKGNRFFLANNNRAPVTCTPGQPGQQRVLHLELKTVAHAGMVGFPNAGKSSLLRAISNARPAVASYPFTTLKPHVGIVHYEGHLQIAVADIPGIIRGAHQNRGLGSAFLRHIERCRFLLFVVDLSQPEPWTQVDDLKYELEMYEKGLSARPHAIVANKIDLPEAQANLSQLRDHLGQEVIVLSALTGENLEQLLLHLKVLYDAYAEAELGQGRQPLRW</sequence>
<comment type="function">
    <text evidence="3 4">Plays a role in the regulation of the mitochondrial ribosome assembly and of translational activity. Displays GTPase activity. Involved in the ribosome maturation process.</text>
</comment>
<comment type="cofactor">
    <cofactor evidence="1">
        <name>Mg(2+)</name>
        <dbReference type="ChEBI" id="CHEBI:18420"/>
    </cofactor>
</comment>
<comment type="subunit">
    <text>Associates with the mitochondrial ribosome large subunit; the association occurs in a GTP-dependent manner.</text>
</comment>
<comment type="subcellular location">
    <subcellularLocation>
        <location>Mitochondrion</location>
    </subcellularLocation>
    <subcellularLocation>
        <location>Mitochondrion inner membrane</location>
        <topology>Peripheral membrane protein</topology>
        <orientation>Matrix side</orientation>
    </subcellularLocation>
</comment>
<comment type="alternative products">
    <event type="alternative splicing"/>
    <isoform>
        <id>Q9H4K7-1</id>
        <name>1</name>
        <sequence type="displayed"/>
    </isoform>
    <isoform>
        <id>Q9H4K7-2</id>
        <name>2</name>
        <sequence type="described" ref="VSP_056672"/>
    </isoform>
</comment>
<comment type="similarity">
    <text evidence="6">Belongs to the TRAFAC class OBG-HflX-like GTPase superfamily. OBG GTPase family.</text>
</comment>
<comment type="sequence caution" evidence="6">
    <conflict type="erroneous termination">
        <sequence resource="EMBL-CDS" id="BAA91783"/>
    </conflict>
    <text>Truncated C-terminus.</text>
</comment>
<protein>
    <recommendedName>
        <fullName>Mitochondrial ribosome-associated GTPase 2</fullName>
    </recommendedName>
    <alternativeName>
        <fullName>GTP-binding protein 5</fullName>
    </alternativeName>
    <alternativeName>
        <fullName>Protein obg homolog 1</fullName>
        <shortName>ObgH1</shortName>
    </alternativeName>
</protein>
<organism>
    <name type="scientific">Homo sapiens</name>
    <name type="common">Human</name>
    <dbReference type="NCBI Taxonomy" id="9606"/>
    <lineage>
        <taxon>Eukaryota</taxon>
        <taxon>Metazoa</taxon>
        <taxon>Chordata</taxon>
        <taxon>Craniata</taxon>
        <taxon>Vertebrata</taxon>
        <taxon>Euteleostomi</taxon>
        <taxon>Mammalia</taxon>
        <taxon>Eutheria</taxon>
        <taxon>Euarchontoglires</taxon>
        <taxon>Primates</taxon>
        <taxon>Haplorrhini</taxon>
        <taxon>Catarrhini</taxon>
        <taxon>Hominidae</taxon>
        <taxon>Homo</taxon>
    </lineage>
</organism>
<dbReference type="EMBL" id="AK001603">
    <property type="protein sequence ID" value="BAA91783.1"/>
    <property type="status" value="ALT_TERM"/>
    <property type="molecule type" value="mRNA"/>
</dbReference>
<dbReference type="EMBL" id="AK299147">
    <property type="protein sequence ID" value="BAG61197.1"/>
    <property type="molecule type" value="mRNA"/>
</dbReference>
<dbReference type="EMBL" id="AK316027">
    <property type="protein sequence ID" value="BAH14398.1"/>
    <property type="molecule type" value="mRNA"/>
</dbReference>
<dbReference type="EMBL" id="AK316325">
    <property type="protein sequence ID" value="BAH14696.1"/>
    <property type="molecule type" value="mRNA"/>
</dbReference>
<dbReference type="EMBL" id="AL078633">
    <property type="status" value="NOT_ANNOTATED_CDS"/>
    <property type="molecule type" value="Genomic_DNA"/>
</dbReference>
<dbReference type="EMBL" id="CH471077">
    <property type="protein sequence ID" value="EAW75386.1"/>
    <property type="molecule type" value="Genomic_DNA"/>
</dbReference>
<dbReference type="EMBL" id="BC007885">
    <property type="status" value="NOT_ANNOTATED_CDS"/>
    <property type="molecule type" value="mRNA"/>
</dbReference>
<dbReference type="EMBL" id="BC036716">
    <property type="protein sequence ID" value="AAH36716.1"/>
    <property type="molecule type" value="mRNA"/>
</dbReference>
<dbReference type="EMBL" id="AL117498">
    <property type="protein sequence ID" value="CAB55963.1"/>
    <property type="molecule type" value="mRNA"/>
</dbReference>
<dbReference type="CCDS" id="CCDS13492.1">
    <molecule id="Q9H4K7-1"/>
</dbReference>
<dbReference type="PIR" id="T17273">
    <property type="entry name" value="T17273"/>
</dbReference>
<dbReference type="RefSeq" id="NP_056481.1">
    <molecule id="Q9H4K7-1"/>
    <property type="nucleotide sequence ID" value="NM_015666.4"/>
</dbReference>
<dbReference type="RefSeq" id="XP_005260450.1">
    <property type="nucleotide sequence ID" value="XM_005260393.1"/>
</dbReference>
<dbReference type="RefSeq" id="XP_011527078.1">
    <property type="nucleotide sequence ID" value="XM_011528776.1"/>
</dbReference>
<dbReference type="RefSeq" id="XP_016883295.1">
    <property type="nucleotide sequence ID" value="XM_017027806.1"/>
</dbReference>
<dbReference type="RefSeq" id="XP_047296059.1">
    <molecule id="Q9H4K7-1"/>
    <property type="nucleotide sequence ID" value="XM_047440103.1"/>
</dbReference>
<dbReference type="RefSeq" id="XP_054179326.1">
    <molecule id="Q9H4K7-1"/>
    <property type="nucleotide sequence ID" value="XM_054323351.1"/>
</dbReference>
<dbReference type="PDB" id="7O9K">
    <property type="method" value="EM"/>
    <property type="resolution" value="3.10 A"/>
    <property type="chains" value="G=1-406"/>
</dbReference>
<dbReference type="PDB" id="7ODT">
    <property type="method" value="EM"/>
    <property type="resolution" value="3.10 A"/>
    <property type="chains" value="t=1-406"/>
</dbReference>
<dbReference type="PDB" id="7OF5">
    <property type="method" value="EM"/>
    <property type="resolution" value="2.90 A"/>
    <property type="chains" value="x=1-406"/>
</dbReference>
<dbReference type="PDB" id="7OF7">
    <property type="method" value="EM"/>
    <property type="resolution" value="2.50 A"/>
    <property type="chains" value="x=1-406"/>
</dbReference>
<dbReference type="PDBsum" id="7O9K"/>
<dbReference type="PDBsum" id="7ODT"/>
<dbReference type="PDBsum" id="7OF5"/>
<dbReference type="PDBsum" id="7OF7"/>
<dbReference type="EMDB" id="EMD-12763"/>
<dbReference type="EMDB" id="EMD-12847"/>
<dbReference type="EMDB" id="EMD-12870"/>
<dbReference type="EMDB" id="EMD-12872"/>
<dbReference type="SMR" id="Q9H4K7"/>
<dbReference type="BioGRID" id="117590">
    <property type="interactions" value="283"/>
</dbReference>
<dbReference type="FunCoup" id="Q9H4K7">
    <property type="interactions" value="880"/>
</dbReference>
<dbReference type="IntAct" id="Q9H4K7">
    <property type="interactions" value="67"/>
</dbReference>
<dbReference type="MINT" id="Q9H4K7"/>
<dbReference type="STRING" id="9606.ENSP00000359859"/>
<dbReference type="iPTMnet" id="Q9H4K7"/>
<dbReference type="PhosphoSitePlus" id="Q9H4K7"/>
<dbReference type="SwissPalm" id="Q9H4K7"/>
<dbReference type="BioMuta" id="MTG2"/>
<dbReference type="DMDM" id="32469779"/>
<dbReference type="jPOST" id="Q9H4K7"/>
<dbReference type="MassIVE" id="Q9H4K7"/>
<dbReference type="PaxDb" id="9606-ENSP00000359859"/>
<dbReference type="PeptideAtlas" id="Q9H4K7"/>
<dbReference type="ProteomicsDB" id="4933"/>
<dbReference type="ProteomicsDB" id="80850">
    <molecule id="Q9H4K7-1"/>
</dbReference>
<dbReference type="Pumba" id="Q9H4K7"/>
<dbReference type="Antibodypedia" id="29445">
    <property type="antibodies" value="134 antibodies from 26 providers"/>
</dbReference>
<dbReference type="DNASU" id="26164"/>
<dbReference type="Ensembl" id="ENST00000370823.8">
    <molecule id="Q9H4K7-1"/>
    <property type="protein sequence ID" value="ENSP00000359859.3"/>
    <property type="gene ID" value="ENSG00000101181.18"/>
</dbReference>
<dbReference type="GeneID" id="26164"/>
<dbReference type="KEGG" id="hsa:26164"/>
<dbReference type="MANE-Select" id="ENST00000370823.8">
    <property type="protein sequence ID" value="ENSP00000359859.3"/>
    <property type="RefSeq nucleotide sequence ID" value="NM_015666.4"/>
    <property type="RefSeq protein sequence ID" value="NP_056481.1"/>
</dbReference>
<dbReference type="UCSC" id="uc002yce.5">
    <molecule id="Q9H4K7-1"/>
    <property type="organism name" value="human"/>
</dbReference>
<dbReference type="AGR" id="HGNC:16239"/>
<dbReference type="CTD" id="26164"/>
<dbReference type="DisGeNET" id="26164"/>
<dbReference type="GeneCards" id="MTG2"/>
<dbReference type="HGNC" id="HGNC:16239">
    <property type="gene designation" value="MTG2"/>
</dbReference>
<dbReference type="HPA" id="ENSG00000101181">
    <property type="expression patterns" value="Low tissue specificity"/>
</dbReference>
<dbReference type="MIM" id="610919">
    <property type="type" value="gene"/>
</dbReference>
<dbReference type="neXtProt" id="NX_Q9H4K7"/>
<dbReference type="OpenTargets" id="ENSG00000101181"/>
<dbReference type="PharmGKB" id="PA29059"/>
<dbReference type="VEuPathDB" id="HostDB:ENSG00000101181"/>
<dbReference type="eggNOG" id="KOG1489">
    <property type="taxonomic scope" value="Eukaryota"/>
</dbReference>
<dbReference type="GeneTree" id="ENSGT00940000157379"/>
<dbReference type="HOGENOM" id="CLU_011747_2_3_1"/>
<dbReference type="InParanoid" id="Q9H4K7"/>
<dbReference type="OMA" id="VVFDWEP"/>
<dbReference type="OrthoDB" id="347018at2759"/>
<dbReference type="PAN-GO" id="Q9H4K7">
    <property type="GO annotations" value="3 GO annotations based on evolutionary models"/>
</dbReference>
<dbReference type="PhylomeDB" id="Q9H4K7"/>
<dbReference type="TreeFam" id="TF314774"/>
<dbReference type="PathwayCommons" id="Q9H4K7"/>
<dbReference type="SignaLink" id="Q9H4K7"/>
<dbReference type="BioGRID-ORCS" id="26164">
    <property type="hits" value="354 hits in 1132 CRISPR screens"/>
</dbReference>
<dbReference type="ChiTaRS" id="MTG2">
    <property type="organism name" value="human"/>
</dbReference>
<dbReference type="GenomeRNAi" id="26164"/>
<dbReference type="Pharos" id="Q9H4K7">
    <property type="development level" value="Tbio"/>
</dbReference>
<dbReference type="PRO" id="PR:Q9H4K7"/>
<dbReference type="Proteomes" id="UP000005640">
    <property type="component" value="Chromosome 20"/>
</dbReference>
<dbReference type="RNAct" id="Q9H4K7">
    <property type="molecule type" value="protein"/>
</dbReference>
<dbReference type="Bgee" id="ENSG00000101181">
    <property type="expression patterns" value="Expressed in cerebellar hemisphere and 157 other cell types or tissues"/>
</dbReference>
<dbReference type="ExpressionAtlas" id="Q9H4K7">
    <property type="expression patterns" value="baseline and differential"/>
</dbReference>
<dbReference type="GO" id="GO:0005743">
    <property type="term" value="C:mitochondrial inner membrane"/>
    <property type="evidence" value="ECO:0000314"/>
    <property type="project" value="UniProtKB"/>
</dbReference>
<dbReference type="GO" id="GO:0005759">
    <property type="term" value="C:mitochondrial matrix"/>
    <property type="evidence" value="ECO:0000314"/>
    <property type="project" value="UniProtKB"/>
</dbReference>
<dbReference type="GO" id="GO:0005761">
    <property type="term" value="C:mitochondrial ribosome"/>
    <property type="evidence" value="ECO:0000314"/>
    <property type="project" value="UniProtKB"/>
</dbReference>
<dbReference type="GO" id="GO:0005739">
    <property type="term" value="C:mitochondrion"/>
    <property type="evidence" value="ECO:0006056"/>
    <property type="project" value="FlyBase"/>
</dbReference>
<dbReference type="GO" id="GO:0005525">
    <property type="term" value="F:GTP binding"/>
    <property type="evidence" value="ECO:0000318"/>
    <property type="project" value="GO_Central"/>
</dbReference>
<dbReference type="GO" id="GO:0003924">
    <property type="term" value="F:GTPase activity"/>
    <property type="evidence" value="ECO:0000314"/>
    <property type="project" value="UniProtKB"/>
</dbReference>
<dbReference type="GO" id="GO:0000287">
    <property type="term" value="F:magnesium ion binding"/>
    <property type="evidence" value="ECO:0007669"/>
    <property type="project" value="InterPro"/>
</dbReference>
<dbReference type="GO" id="GO:1902775">
    <property type="term" value="P:mitochondrial large ribosomal subunit assembly"/>
    <property type="evidence" value="ECO:0000315"/>
    <property type="project" value="FlyBase"/>
</dbReference>
<dbReference type="GO" id="GO:0070129">
    <property type="term" value="P:regulation of mitochondrial translation"/>
    <property type="evidence" value="ECO:0000315"/>
    <property type="project" value="UniProtKB"/>
</dbReference>
<dbReference type="GO" id="GO:0044065">
    <property type="term" value="P:regulation of respiratory system process"/>
    <property type="evidence" value="ECO:0000315"/>
    <property type="project" value="UniProtKB"/>
</dbReference>
<dbReference type="CDD" id="cd01898">
    <property type="entry name" value="Obg"/>
    <property type="match status" value="1"/>
</dbReference>
<dbReference type="FunFam" id="2.70.210.12:FF:000001">
    <property type="entry name" value="GTPase Obg"/>
    <property type="match status" value="1"/>
</dbReference>
<dbReference type="FunFam" id="3.40.50.300:FF:001339">
    <property type="entry name" value="Mitochondrial ribosome-associated GTPase 2"/>
    <property type="match status" value="1"/>
</dbReference>
<dbReference type="Gene3D" id="2.70.210.12">
    <property type="entry name" value="GTP1/OBG domain"/>
    <property type="match status" value="1"/>
</dbReference>
<dbReference type="Gene3D" id="3.40.50.300">
    <property type="entry name" value="P-loop containing nucleotide triphosphate hydrolases"/>
    <property type="match status" value="1"/>
</dbReference>
<dbReference type="HAMAP" id="MF_01454">
    <property type="entry name" value="GTPase_Obg"/>
    <property type="match status" value="1"/>
</dbReference>
<dbReference type="InterPro" id="IPR031167">
    <property type="entry name" value="G_OBG"/>
</dbReference>
<dbReference type="InterPro" id="IPR006073">
    <property type="entry name" value="GTP-bd"/>
</dbReference>
<dbReference type="InterPro" id="IPR014100">
    <property type="entry name" value="GTP-bd_Obg/CgtA"/>
</dbReference>
<dbReference type="InterPro" id="IPR006169">
    <property type="entry name" value="GTP1_OBG_dom"/>
</dbReference>
<dbReference type="InterPro" id="IPR036726">
    <property type="entry name" value="GTP1_OBG_dom_sf"/>
</dbReference>
<dbReference type="InterPro" id="IPR045086">
    <property type="entry name" value="OBG_GTPase"/>
</dbReference>
<dbReference type="InterPro" id="IPR027417">
    <property type="entry name" value="P-loop_NTPase"/>
</dbReference>
<dbReference type="InterPro" id="IPR005225">
    <property type="entry name" value="Small_GTP-bd"/>
</dbReference>
<dbReference type="NCBIfam" id="TIGR02729">
    <property type="entry name" value="Obg_CgtA"/>
    <property type="match status" value="1"/>
</dbReference>
<dbReference type="NCBIfam" id="NF008956">
    <property type="entry name" value="PRK12299.1"/>
    <property type="match status" value="1"/>
</dbReference>
<dbReference type="NCBIfam" id="TIGR00231">
    <property type="entry name" value="small_GTP"/>
    <property type="match status" value="1"/>
</dbReference>
<dbReference type="PANTHER" id="PTHR11702">
    <property type="entry name" value="DEVELOPMENTALLY REGULATED GTP-BINDING PROTEIN-RELATED"/>
    <property type="match status" value="1"/>
</dbReference>
<dbReference type="PANTHER" id="PTHR11702:SF31">
    <property type="entry name" value="MITOCHONDRIAL RIBOSOME-ASSOCIATED GTPASE 2"/>
    <property type="match status" value="1"/>
</dbReference>
<dbReference type="Pfam" id="PF01018">
    <property type="entry name" value="GTP1_OBG"/>
    <property type="match status" value="1"/>
</dbReference>
<dbReference type="Pfam" id="PF01926">
    <property type="entry name" value="MMR_HSR1"/>
    <property type="match status" value="1"/>
</dbReference>
<dbReference type="PIRSF" id="PIRSF002401">
    <property type="entry name" value="GTP_bd_Obg/CgtA"/>
    <property type="match status" value="1"/>
</dbReference>
<dbReference type="PRINTS" id="PR00326">
    <property type="entry name" value="GTP1OBG"/>
</dbReference>
<dbReference type="SUPFAM" id="SSF82051">
    <property type="entry name" value="Obg GTP-binding protein N-terminal domain"/>
    <property type="match status" value="1"/>
</dbReference>
<dbReference type="SUPFAM" id="SSF52540">
    <property type="entry name" value="P-loop containing nucleoside triphosphate hydrolases"/>
    <property type="match status" value="1"/>
</dbReference>
<dbReference type="PROSITE" id="PS51710">
    <property type="entry name" value="G_OBG"/>
    <property type="match status" value="1"/>
</dbReference>
<dbReference type="PROSITE" id="PS51883">
    <property type="entry name" value="OBG"/>
    <property type="match status" value="1"/>
</dbReference>
<proteinExistence type="evidence at protein level"/>
<keyword id="KW-0002">3D-structure</keyword>
<keyword id="KW-0025">Alternative splicing</keyword>
<keyword id="KW-0342">GTP-binding</keyword>
<keyword id="KW-0460">Magnesium</keyword>
<keyword id="KW-0472">Membrane</keyword>
<keyword id="KW-0479">Metal-binding</keyword>
<keyword id="KW-0496">Mitochondrion</keyword>
<keyword id="KW-0999">Mitochondrion inner membrane</keyword>
<keyword id="KW-0547">Nucleotide-binding</keyword>
<keyword id="KW-1267">Proteomics identification</keyword>
<keyword id="KW-1185">Reference proteome</keyword>
<keyword id="KW-0690">Ribosome biogenesis</keyword>
<keyword id="KW-0810">Translation regulation</keyword>
<accession>Q9H4K7</accession>
<accession>A6NDR3</accession>
<accession>B4DR85</accession>
<accession>Q96I17</accession>
<accession>Q9NVG9</accession>
<accession>Q9UFR4</accession>
<reference key="1">
    <citation type="journal article" date="2004" name="Nat. Genet.">
        <title>Complete sequencing and characterization of 21,243 full-length human cDNAs.</title>
        <authorList>
            <person name="Ota T."/>
            <person name="Suzuki Y."/>
            <person name="Nishikawa T."/>
            <person name="Otsuki T."/>
            <person name="Sugiyama T."/>
            <person name="Irie R."/>
            <person name="Wakamatsu A."/>
            <person name="Hayashi K."/>
            <person name="Sato H."/>
            <person name="Nagai K."/>
            <person name="Kimura K."/>
            <person name="Makita H."/>
            <person name="Sekine M."/>
            <person name="Obayashi M."/>
            <person name="Nishi T."/>
            <person name="Shibahara T."/>
            <person name="Tanaka T."/>
            <person name="Ishii S."/>
            <person name="Yamamoto J."/>
            <person name="Saito K."/>
            <person name="Kawai Y."/>
            <person name="Isono Y."/>
            <person name="Nakamura Y."/>
            <person name="Nagahari K."/>
            <person name="Murakami K."/>
            <person name="Yasuda T."/>
            <person name="Iwayanagi T."/>
            <person name="Wagatsuma M."/>
            <person name="Shiratori A."/>
            <person name="Sudo H."/>
            <person name="Hosoiri T."/>
            <person name="Kaku Y."/>
            <person name="Kodaira H."/>
            <person name="Kondo H."/>
            <person name="Sugawara M."/>
            <person name="Takahashi M."/>
            <person name="Kanda K."/>
            <person name="Yokoi T."/>
            <person name="Furuya T."/>
            <person name="Kikkawa E."/>
            <person name="Omura Y."/>
            <person name="Abe K."/>
            <person name="Kamihara K."/>
            <person name="Katsuta N."/>
            <person name="Sato K."/>
            <person name="Tanikawa M."/>
            <person name="Yamazaki M."/>
            <person name="Ninomiya K."/>
            <person name="Ishibashi T."/>
            <person name="Yamashita H."/>
            <person name="Murakawa K."/>
            <person name="Fujimori K."/>
            <person name="Tanai H."/>
            <person name="Kimata M."/>
            <person name="Watanabe M."/>
            <person name="Hiraoka S."/>
            <person name="Chiba Y."/>
            <person name="Ishida S."/>
            <person name="Ono Y."/>
            <person name="Takiguchi S."/>
            <person name="Watanabe S."/>
            <person name="Yosida M."/>
            <person name="Hotuta T."/>
            <person name="Kusano J."/>
            <person name="Kanehori K."/>
            <person name="Takahashi-Fujii A."/>
            <person name="Hara H."/>
            <person name="Tanase T.-O."/>
            <person name="Nomura Y."/>
            <person name="Togiya S."/>
            <person name="Komai F."/>
            <person name="Hara R."/>
            <person name="Takeuchi K."/>
            <person name="Arita M."/>
            <person name="Imose N."/>
            <person name="Musashino K."/>
            <person name="Yuuki H."/>
            <person name="Oshima A."/>
            <person name="Sasaki N."/>
            <person name="Aotsuka S."/>
            <person name="Yoshikawa Y."/>
            <person name="Matsunawa H."/>
            <person name="Ichihara T."/>
            <person name="Shiohata N."/>
            <person name="Sano S."/>
            <person name="Moriya S."/>
            <person name="Momiyama H."/>
            <person name="Satoh N."/>
            <person name="Takami S."/>
            <person name="Terashima Y."/>
            <person name="Suzuki O."/>
            <person name="Nakagawa S."/>
            <person name="Senoh A."/>
            <person name="Mizoguchi H."/>
            <person name="Goto Y."/>
            <person name="Shimizu F."/>
            <person name="Wakebe H."/>
            <person name="Hishigaki H."/>
            <person name="Watanabe T."/>
            <person name="Sugiyama A."/>
            <person name="Takemoto M."/>
            <person name="Kawakami B."/>
            <person name="Yamazaki M."/>
            <person name="Watanabe K."/>
            <person name="Kumagai A."/>
            <person name="Itakura S."/>
            <person name="Fukuzumi Y."/>
            <person name="Fujimori Y."/>
            <person name="Komiyama M."/>
            <person name="Tashiro H."/>
            <person name="Tanigami A."/>
            <person name="Fujiwara T."/>
            <person name="Ono T."/>
            <person name="Yamada K."/>
            <person name="Fujii Y."/>
            <person name="Ozaki K."/>
            <person name="Hirao M."/>
            <person name="Ohmori Y."/>
            <person name="Kawabata A."/>
            <person name="Hikiji T."/>
            <person name="Kobatake N."/>
            <person name="Inagaki H."/>
            <person name="Ikema Y."/>
            <person name="Okamoto S."/>
            <person name="Okitani R."/>
            <person name="Kawakami T."/>
            <person name="Noguchi S."/>
            <person name="Itoh T."/>
            <person name="Shigeta K."/>
            <person name="Senba T."/>
            <person name="Matsumura K."/>
            <person name="Nakajima Y."/>
            <person name="Mizuno T."/>
            <person name="Morinaga M."/>
            <person name="Sasaki M."/>
            <person name="Togashi T."/>
            <person name="Oyama M."/>
            <person name="Hata H."/>
            <person name="Watanabe M."/>
            <person name="Komatsu T."/>
            <person name="Mizushima-Sugano J."/>
            <person name="Satoh T."/>
            <person name="Shirai Y."/>
            <person name="Takahashi Y."/>
            <person name="Nakagawa K."/>
            <person name="Okumura K."/>
            <person name="Nagase T."/>
            <person name="Nomura N."/>
            <person name="Kikuchi H."/>
            <person name="Masuho Y."/>
            <person name="Yamashita R."/>
            <person name="Nakai K."/>
            <person name="Yada T."/>
            <person name="Nakamura Y."/>
            <person name="Ohara O."/>
            <person name="Isogai T."/>
            <person name="Sugano S."/>
        </authorList>
    </citation>
    <scope>NUCLEOTIDE SEQUENCE [LARGE SCALE MRNA] (ISOFORMS 1 AND 2)</scope>
    <source>
        <tissue>Brain</tissue>
        <tissue>Small intestine</tissue>
    </source>
</reference>
<reference key="2">
    <citation type="journal article" date="2001" name="Nature">
        <title>The DNA sequence and comparative analysis of human chromosome 20.</title>
        <authorList>
            <person name="Deloukas P."/>
            <person name="Matthews L.H."/>
            <person name="Ashurst J.L."/>
            <person name="Burton J."/>
            <person name="Gilbert J.G.R."/>
            <person name="Jones M."/>
            <person name="Stavrides G."/>
            <person name="Almeida J.P."/>
            <person name="Babbage A.K."/>
            <person name="Bagguley C.L."/>
            <person name="Bailey J."/>
            <person name="Barlow K.F."/>
            <person name="Bates K.N."/>
            <person name="Beard L.M."/>
            <person name="Beare D.M."/>
            <person name="Beasley O.P."/>
            <person name="Bird C.P."/>
            <person name="Blakey S.E."/>
            <person name="Bridgeman A.M."/>
            <person name="Brown A.J."/>
            <person name="Buck D."/>
            <person name="Burrill W.D."/>
            <person name="Butler A.P."/>
            <person name="Carder C."/>
            <person name="Carter N.P."/>
            <person name="Chapman J.C."/>
            <person name="Clamp M."/>
            <person name="Clark G."/>
            <person name="Clark L.N."/>
            <person name="Clark S.Y."/>
            <person name="Clee C.M."/>
            <person name="Clegg S."/>
            <person name="Cobley V.E."/>
            <person name="Collier R.E."/>
            <person name="Connor R.E."/>
            <person name="Corby N.R."/>
            <person name="Coulson A."/>
            <person name="Coville G.J."/>
            <person name="Deadman R."/>
            <person name="Dhami P.D."/>
            <person name="Dunn M."/>
            <person name="Ellington A.G."/>
            <person name="Frankland J.A."/>
            <person name="Fraser A."/>
            <person name="French L."/>
            <person name="Garner P."/>
            <person name="Grafham D.V."/>
            <person name="Griffiths C."/>
            <person name="Griffiths M.N.D."/>
            <person name="Gwilliam R."/>
            <person name="Hall R.E."/>
            <person name="Hammond S."/>
            <person name="Harley J.L."/>
            <person name="Heath P.D."/>
            <person name="Ho S."/>
            <person name="Holden J.L."/>
            <person name="Howden P.J."/>
            <person name="Huckle E."/>
            <person name="Hunt A.R."/>
            <person name="Hunt S.E."/>
            <person name="Jekosch K."/>
            <person name="Johnson C.M."/>
            <person name="Johnson D."/>
            <person name="Kay M.P."/>
            <person name="Kimberley A.M."/>
            <person name="King A."/>
            <person name="Knights A."/>
            <person name="Laird G.K."/>
            <person name="Lawlor S."/>
            <person name="Lehvaeslaiho M.H."/>
            <person name="Leversha M.A."/>
            <person name="Lloyd C."/>
            <person name="Lloyd D.M."/>
            <person name="Lovell J.D."/>
            <person name="Marsh V.L."/>
            <person name="Martin S.L."/>
            <person name="McConnachie L.J."/>
            <person name="McLay K."/>
            <person name="McMurray A.A."/>
            <person name="Milne S.A."/>
            <person name="Mistry D."/>
            <person name="Moore M.J.F."/>
            <person name="Mullikin J.C."/>
            <person name="Nickerson T."/>
            <person name="Oliver K."/>
            <person name="Parker A."/>
            <person name="Patel R."/>
            <person name="Pearce T.A.V."/>
            <person name="Peck A.I."/>
            <person name="Phillimore B.J.C.T."/>
            <person name="Prathalingam S.R."/>
            <person name="Plumb R.W."/>
            <person name="Ramsay H."/>
            <person name="Rice C.M."/>
            <person name="Ross M.T."/>
            <person name="Scott C.E."/>
            <person name="Sehra H.K."/>
            <person name="Shownkeen R."/>
            <person name="Sims S."/>
            <person name="Skuce C.D."/>
            <person name="Smith M.L."/>
            <person name="Soderlund C."/>
            <person name="Steward C.A."/>
            <person name="Sulston J.E."/>
            <person name="Swann R.M."/>
            <person name="Sycamore N."/>
            <person name="Taylor R."/>
            <person name="Tee L."/>
            <person name="Thomas D.W."/>
            <person name="Thorpe A."/>
            <person name="Tracey A."/>
            <person name="Tromans A.C."/>
            <person name="Vaudin M."/>
            <person name="Wall M."/>
            <person name="Wallis J.M."/>
            <person name="Whitehead S.L."/>
            <person name="Whittaker P."/>
            <person name="Willey D.L."/>
            <person name="Williams L."/>
            <person name="Williams S.A."/>
            <person name="Wilming L."/>
            <person name="Wray P.W."/>
            <person name="Hubbard T."/>
            <person name="Durbin R.M."/>
            <person name="Bentley D.R."/>
            <person name="Beck S."/>
            <person name="Rogers J."/>
        </authorList>
    </citation>
    <scope>NUCLEOTIDE SEQUENCE [LARGE SCALE GENOMIC DNA]</scope>
</reference>
<reference key="3">
    <citation type="submission" date="2005-09" db="EMBL/GenBank/DDBJ databases">
        <authorList>
            <person name="Mural R.J."/>
            <person name="Istrail S."/>
            <person name="Sutton G."/>
            <person name="Florea L."/>
            <person name="Halpern A.L."/>
            <person name="Mobarry C.M."/>
            <person name="Lippert R."/>
            <person name="Walenz B."/>
            <person name="Shatkay H."/>
            <person name="Dew I."/>
            <person name="Miller J.R."/>
            <person name="Flanigan M.J."/>
            <person name="Edwards N.J."/>
            <person name="Bolanos R."/>
            <person name="Fasulo D."/>
            <person name="Halldorsson B.V."/>
            <person name="Hannenhalli S."/>
            <person name="Turner R."/>
            <person name="Yooseph S."/>
            <person name="Lu F."/>
            <person name="Nusskern D.R."/>
            <person name="Shue B.C."/>
            <person name="Zheng X.H."/>
            <person name="Zhong F."/>
            <person name="Delcher A.L."/>
            <person name="Huson D.H."/>
            <person name="Kravitz S.A."/>
            <person name="Mouchard L."/>
            <person name="Reinert K."/>
            <person name="Remington K.A."/>
            <person name="Clark A.G."/>
            <person name="Waterman M.S."/>
            <person name="Eichler E.E."/>
            <person name="Adams M.D."/>
            <person name="Hunkapiller M.W."/>
            <person name="Myers E.W."/>
            <person name="Venter J.C."/>
        </authorList>
    </citation>
    <scope>NUCLEOTIDE SEQUENCE [LARGE SCALE GENOMIC DNA]</scope>
</reference>
<reference key="4">
    <citation type="journal article" date="2004" name="Genome Res.">
        <title>The status, quality, and expansion of the NIH full-length cDNA project: the Mammalian Gene Collection (MGC).</title>
        <authorList>
            <consortium name="The MGC Project Team"/>
        </authorList>
    </citation>
    <scope>NUCLEOTIDE SEQUENCE [LARGE SCALE MRNA] (ISOFORM 1)</scope>
    <source>
        <tissue>Muscle</tissue>
    </source>
</reference>
<reference key="5">
    <citation type="journal article" date="2007" name="BMC Genomics">
        <title>The full-ORF clone resource of the German cDNA consortium.</title>
        <authorList>
            <person name="Bechtel S."/>
            <person name="Rosenfelder H."/>
            <person name="Duda A."/>
            <person name="Schmidt C.P."/>
            <person name="Ernst U."/>
            <person name="Wellenreuther R."/>
            <person name="Mehrle A."/>
            <person name="Schuster C."/>
            <person name="Bahr A."/>
            <person name="Bloecker H."/>
            <person name="Heubner D."/>
            <person name="Hoerlein A."/>
            <person name="Michel G."/>
            <person name="Wedler H."/>
            <person name="Koehrer K."/>
            <person name="Ottenwaelder B."/>
            <person name="Poustka A."/>
            <person name="Wiemann S."/>
            <person name="Schupp I."/>
        </authorList>
    </citation>
    <scope>NUCLEOTIDE SEQUENCE [LARGE SCALE MRNA] OF 312-406 (ISOFORM 1/2)</scope>
    <source>
        <tissue>Testis</tissue>
    </source>
</reference>
<reference key="6">
    <citation type="journal article" date="2006" name="Genes Cells">
        <title>Human small G proteins, ObgH1, and ObgH2, participate in the maintenance of mitochondria and nucleolar architectures.</title>
        <authorList>
            <person name="Hirano Y."/>
            <person name="Ohniwa R.L."/>
            <person name="Wada C."/>
            <person name="Yoshimura S.H."/>
            <person name="Takeyasu K."/>
        </authorList>
    </citation>
    <scope>FUNCTION</scope>
    <scope>SUBCELLULAR LOCATION</scope>
    <scope>REGION</scope>
</reference>
<reference key="7">
    <citation type="journal article" date="2013" name="Nucleic Acids Res.">
        <title>Human G-proteins, ObgH1 and Mtg1, associate with the large mitochondrial ribosome subunit and are involved in translation and assembly of respiratory complexes.</title>
        <authorList>
            <person name="Kotani T."/>
            <person name="Akabane S."/>
            <person name="Takeyasu K."/>
            <person name="Ueda T."/>
            <person name="Takeuchi N."/>
        </authorList>
    </citation>
    <scope>FUNCTION</scope>
    <scope>ASSOCIATION WITH MITOCHONDRIAL RIBOSOME LARGE SUBUNIT</scope>
    <scope>SUBCELLULAR LOCATION</scope>
</reference>
<gene>
    <name type="primary">MTG2</name>
    <name type="synonym">GTPBP5</name>
    <name type="synonym">OBGH1</name>
</gene>
<name>MTG2_HUMAN</name>